<feature type="chain" id="PRO_1000087690" description="Ribosomal RNA large subunit methyltransferase E">
    <location>
        <begin position="1"/>
        <end position="269"/>
    </location>
</feature>
<feature type="region of interest" description="Disordered" evidence="2">
    <location>
        <begin position="234"/>
        <end position="269"/>
    </location>
</feature>
<feature type="compositionally biased region" description="Basic and acidic residues" evidence="2">
    <location>
        <begin position="258"/>
        <end position="269"/>
    </location>
</feature>
<feature type="active site" description="Proton acceptor" evidence="1">
    <location>
        <position position="160"/>
    </location>
</feature>
<feature type="binding site" evidence="1">
    <location>
        <position position="58"/>
    </location>
    <ligand>
        <name>S-adenosyl-L-methionine</name>
        <dbReference type="ChEBI" id="CHEBI:59789"/>
    </ligand>
</feature>
<feature type="binding site" evidence="1">
    <location>
        <position position="60"/>
    </location>
    <ligand>
        <name>S-adenosyl-L-methionine</name>
        <dbReference type="ChEBI" id="CHEBI:59789"/>
    </ligand>
</feature>
<feature type="binding site" evidence="1">
    <location>
        <position position="78"/>
    </location>
    <ligand>
        <name>S-adenosyl-L-methionine</name>
        <dbReference type="ChEBI" id="CHEBI:59789"/>
    </ligand>
</feature>
<feature type="binding site" evidence="1">
    <location>
        <position position="96"/>
    </location>
    <ligand>
        <name>S-adenosyl-L-methionine</name>
        <dbReference type="ChEBI" id="CHEBI:59789"/>
    </ligand>
</feature>
<feature type="binding site" evidence="1">
    <location>
        <position position="120"/>
    </location>
    <ligand>
        <name>S-adenosyl-L-methionine</name>
        <dbReference type="ChEBI" id="CHEBI:59789"/>
    </ligand>
</feature>
<dbReference type="EC" id="2.1.1.166" evidence="1"/>
<dbReference type="EMBL" id="CP000743">
    <property type="protein sequence ID" value="ABR56177.1"/>
    <property type="molecule type" value="Genomic_DNA"/>
</dbReference>
<dbReference type="RefSeq" id="WP_011973309.1">
    <property type="nucleotide sequence ID" value="NC_009635.1"/>
</dbReference>
<dbReference type="SMR" id="A6UUK5"/>
<dbReference type="STRING" id="419665.Maeo_0592"/>
<dbReference type="GeneID" id="5327424"/>
<dbReference type="KEGG" id="mae:Maeo_0592"/>
<dbReference type="eggNOG" id="arCOG00079">
    <property type="taxonomic scope" value="Archaea"/>
</dbReference>
<dbReference type="HOGENOM" id="CLU_009422_4_4_2"/>
<dbReference type="OrthoDB" id="26307at2157"/>
<dbReference type="Proteomes" id="UP000001106">
    <property type="component" value="Chromosome"/>
</dbReference>
<dbReference type="GO" id="GO:0005737">
    <property type="term" value="C:cytoplasm"/>
    <property type="evidence" value="ECO:0007669"/>
    <property type="project" value="UniProtKB-SubCell"/>
</dbReference>
<dbReference type="GO" id="GO:0008650">
    <property type="term" value="F:rRNA (uridine-2'-O-)-methyltransferase activity"/>
    <property type="evidence" value="ECO:0007669"/>
    <property type="project" value="UniProtKB-UniRule"/>
</dbReference>
<dbReference type="Gene3D" id="3.40.50.150">
    <property type="entry name" value="Vaccinia Virus protein VP39"/>
    <property type="match status" value="1"/>
</dbReference>
<dbReference type="HAMAP" id="MF_01547">
    <property type="entry name" value="RNA_methyltr_E"/>
    <property type="match status" value="1"/>
</dbReference>
<dbReference type="InterPro" id="IPR050082">
    <property type="entry name" value="RNA_methyltr_RlmE"/>
</dbReference>
<dbReference type="InterPro" id="IPR002877">
    <property type="entry name" value="RNA_MeTrfase_FtsJ_dom"/>
</dbReference>
<dbReference type="InterPro" id="IPR015507">
    <property type="entry name" value="rRNA-MeTfrase_E"/>
</dbReference>
<dbReference type="InterPro" id="IPR029063">
    <property type="entry name" value="SAM-dependent_MTases_sf"/>
</dbReference>
<dbReference type="PANTHER" id="PTHR10920:SF13">
    <property type="entry name" value="PRE-RRNA 2'-O-RIBOSE RNA METHYLTRANSFERASE FTSJ3"/>
    <property type="match status" value="1"/>
</dbReference>
<dbReference type="PANTHER" id="PTHR10920">
    <property type="entry name" value="RIBOSOMAL RNA METHYLTRANSFERASE"/>
    <property type="match status" value="1"/>
</dbReference>
<dbReference type="Pfam" id="PF01728">
    <property type="entry name" value="FtsJ"/>
    <property type="match status" value="1"/>
</dbReference>
<dbReference type="SUPFAM" id="SSF53335">
    <property type="entry name" value="S-adenosyl-L-methionine-dependent methyltransferases"/>
    <property type="match status" value="1"/>
</dbReference>
<proteinExistence type="inferred from homology"/>
<reference key="1">
    <citation type="submission" date="2007-06" db="EMBL/GenBank/DDBJ databases">
        <title>Complete sequence of Methanococcus aeolicus Nankai-3.</title>
        <authorList>
            <consortium name="US DOE Joint Genome Institute"/>
            <person name="Copeland A."/>
            <person name="Lucas S."/>
            <person name="Lapidus A."/>
            <person name="Barry K."/>
            <person name="Glavina del Rio T."/>
            <person name="Dalin E."/>
            <person name="Tice H."/>
            <person name="Pitluck S."/>
            <person name="Chain P."/>
            <person name="Malfatti S."/>
            <person name="Shin M."/>
            <person name="Vergez L."/>
            <person name="Schmutz J."/>
            <person name="Larimer F."/>
            <person name="Land M."/>
            <person name="Hauser L."/>
            <person name="Kyrpides N."/>
            <person name="Lykidis A."/>
            <person name="Sieprawska-Lupa M."/>
            <person name="Whitman W.B."/>
            <person name="Richardson P."/>
        </authorList>
    </citation>
    <scope>NUCLEOTIDE SEQUENCE [LARGE SCALE GENOMIC DNA]</scope>
    <source>
        <strain>ATCC BAA-1280 / DSM 17508 / OCM 812 / Nankai-3</strain>
    </source>
</reference>
<accession>A6UUK5</accession>
<sequence length="269" mass="30936">MGKKDKRWVMQRKNDFYYKLAKQNHYRSRASYKLLQLNEKFEIIYEGDNVVDLGCAPGGWLQASYDLVGEDGFVIGVDLQKVKPLREENIVAIQGDMTKKETINKIIDLMPSKADVVICDASPNISGVWEVDHSRSIELSLMALIATTHLLRKNGNFVVKVFQGSLFDQYVQLLTKYFKKVQTTKPKASRSVSAEVYVIGKKFLGKKFDKNTDFPIIKLIEDNEFLDRYIEETHEKKEGNETSDNDEDNNKNGLMIKKIKELRGKRSKL</sequence>
<protein>
    <recommendedName>
        <fullName evidence="1">Ribosomal RNA large subunit methyltransferase E</fullName>
        <ecNumber evidence="1">2.1.1.166</ecNumber>
    </recommendedName>
    <alternativeName>
        <fullName evidence="1">23S rRNA Um2552 methyltransferase</fullName>
    </alternativeName>
    <alternativeName>
        <fullName evidence="1">rRNA (uridine-2'-O-)-methyltransferase</fullName>
    </alternativeName>
</protein>
<keyword id="KW-0963">Cytoplasm</keyword>
<keyword id="KW-0489">Methyltransferase</keyword>
<keyword id="KW-0698">rRNA processing</keyword>
<keyword id="KW-0949">S-adenosyl-L-methionine</keyword>
<keyword id="KW-0808">Transferase</keyword>
<name>RLME_META3</name>
<evidence type="ECO:0000255" key="1">
    <source>
        <dbReference type="HAMAP-Rule" id="MF_01547"/>
    </source>
</evidence>
<evidence type="ECO:0000256" key="2">
    <source>
        <dbReference type="SAM" id="MobiDB-lite"/>
    </source>
</evidence>
<comment type="function">
    <text evidence="1">Specifically methylates the uridine in position 2552 of 23S rRNA at the 2'-O position of the ribose in the fully assembled 50S ribosomal subunit.</text>
</comment>
<comment type="catalytic activity">
    <reaction evidence="1">
        <text>uridine(2552) in 23S rRNA + S-adenosyl-L-methionine = 2'-O-methyluridine(2552) in 23S rRNA + S-adenosyl-L-homocysteine + H(+)</text>
        <dbReference type="Rhea" id="RHEA:42720"/>
        <dbReference type="Rhea" id="RHEA-COMP:10202"/>
        <dbReference type="Rhea" id="RHEA-COMP:10203"/>
        <dbReference type="ChEBI" id="CHEBI:15378"/>
        <dbReference type="ChEBI" id="CHEBI:57856"/>
        <dbReference type="ChEBI" id="CHEBI:59789"/>
        <dbReference type="ChEBI" id="CHEBI:65315"/>
        <dbReference type="ChEBI" id="CHEBI:74478"/>
        <dbReference type="EC" id="2.1.1.166"/>
    </reaction>
</comment>
<comment type="subcellular location">
    <subcellularLocation>
        <location evidence="1">Cytoplasm</location>
    </subcellularLocation>
</comment>
<comment type="similarity">
    <text evidence="1">Belongs to the class I-like SAM-binding methyltransferase superfamily. RNA methyltransferase RlmE family.</text>
</comment>
<organism>
    <name type="scientific">Methanococcus aeolicus (strain ATCC BAA-1280 / DSM 17508 / OCM 812 / Nankai-3)</name>
    <dbReference type="NCBI Taxonomy" id="419665"/>
    <lineage>
        <taxon>Archaea</taxon>
        <taxon>Methanobacteriati</taxon>
        <taxon>Methanobacteriota</taxon>
        <taxon>Methanomada group</taxon>
        <taxon>Methanococci</taxon>
        <taxon>Methanococcales</taxon>
        <taxon>Methanococcaceae</taxon>
        <taxon>Methanococcus</taxon>
    </lineage>
</organism>
<gene>
    <name evidence="1" type="primary">rlmE</name>
    <name evidence="1" type="synonym">rrmJ</name>
    <name type="ordered locus">Maeo_0592</name>
</gene>